<organism>
    <name type="scientific">Mus musculus</name>
    <name type="common">Mouse</name>
    <dbReference type="NCBI Taxonomy" id="10090"/>
    <lineage>
        <taxon>Eukaryota</taxon>
        <taxon>Metazoa</taxon>
        <taxon>Chordata</taxon>
        <taxon>Craniata</taxon>
        <taxon>Vertebrata</taxon>
        <taxon>Euteleostomi</taxon>
        <taxon>Mammalia</taxon>
        <taxon>Eutheria</taxon>
        <taxon>Euarchontoglires</taxon>
        <taxon>Glires</taxon>
        <taxon>Rodentia</taxon>
        <taxon>Myomorpha</taxon>
        <taxon>Muroidea</taxon>
        <taxon>Muridae</taxon>
        <taxon>Murinae</taxon>
        <taxon>Mus</taxon>
        <taxon>Mus</taxon>
    </lineage>
</organism>
<comment type="function">
    <text evidence="1">Component of the CCR4-NOT complex which is one of the major cellular mRNA deadenylases and is linked to various cellular processes including bulk mRNA degradation, miRNA-mediated repression, translational repression during translational initiation and general transcription regulation. Additional complex functions may be a consequence of its influence on mRNA expression. Is required for the association of CNOT10 with the CCR4-NOT complex. Seems not to be required for complex deadenylase function (By similarity).</text>
</comment>
<comment type="subunit">
    <text evidence="1">Component of the CCR4-NOT complex; distinct complexes seem to exist that differ in the participation of probably mutually exclusive catalytic subunits. CNOT10 and CNOT11 form a subcomplex docke to the CNOT1 scaffold (By similarity).</text>
</comment>
<comment type="subcellular location">
    <subcellularLocation>
        <location evidence="1">Cytoplasm</location>
    </subcellularLocation>
    <subcellularLocation>
        <location evidence="1">Nucleus</location>
    </subcellularLocation>
</comment>
<comment type="similarity">
    <text evidence="3">Belongs to the CNOT11 family.</text>
</comment>
<reference key="1">
    <citation type="journal article" date="2005" name="Science">
        <title>The transcriptional landscape of the mammalian genome.</title>
        <authorList>
            <person name="Carninci P."/>
            <person name="Kasukawa T."/>
            <person name="Katayama S."/>
            <person name="Gough J."/>
            <person name="Frith M.C."/>
            <person name="Maeda N."/>
            <person name="Oyama R."/>
            <person name="Ravasi T."/>
            <person name="Lenhard B."/>
            <person name="Wells C."/>
            <person name="Kodzius R."/>
            <person name="Shimokawa K."/>
            <person name="Bajic V.B."/>
            <person name="Brenner S.E."/>
            <person name="Batalov S."/>
            <person name="Forrest A.R."/>
            <person name="Zavolan M."/>
            <person name="Davis M.J."/>
            <person name="Wilming L.G."/>
            <person name="Aidinis V."/>
            <person name="Allen J.E."/>
            <person name="Ambesi-Impiombato A."/>
            <person name="Apweiler R."/>
            <person name="Aturaliya R.N."/>
            <person name="Bailey T.L."/>
            <person name="Bansal M."/>
            <person name="Baxter L."/>
            <person name="Beisel K.W."/>
            <person name="Bersano T."/>
            <person name="Bono H."/>
            <person name="Chalk A.M."/>
            <person name="Chiu K.P."/>
            <person name="Choudhary V."/>
            <person name="Christoffels A."/>
            <person name="Clutterbuck D.R."/>
            <person name="Crowe M.L."/>
            <person name="Dalla E."/>
            <person name="Dalrymple B.P."/>
            <person name="de Bono B."/>
            <person name="Della Gatta G."/>
            <person name="di Bernardo D."/>
            <person name="Down T."/>
            <person name="Engstrom P."/>
            <person name="Fagiolini M."/>
            <person name="Faulkner G."/>
            <person name="Fletcher C.F."/>
            <person name="Fukushima T."/>
            <person name="Furuno M."/>
            <person name="Futaki S."/>
            <person name="Gariboldi M."/>
            <person name="Georgii-Hemming P."/>
            <person name="Gingeras T.R."/>
            <person name="Gojobori T."/>
            <person name="Green R.E."/>
            <person name="Gustincich S."/>
            <person name="Harbers M."/>
            <person name="Hayashi Y."/>
            <person name="Hensch T.K."/>
            <person name="Hirokawa N."/>
            <person name="Hill D."/>
            <person name="Huminiecki L."/>
            <person name="Iacono M."/>
            <person name="Ikeo K."/>
            <person name="Iwama A."/>
            <person name="Ishikawa T."/>
            <person name="Jakt M."/>
            <person name="Kanapin A."/>
            <person name="Katoh M."/>
            <person name="Kawasawa Y."/>
            <person name="Kelso J."/>
            <person name="Kitamura H."/>
            <person name="Kitano H."/>
            <person name="Kollias G."/>
            <person name="Krishnan S.P."/>
            <person name="Kruger A."/>
            <person name="Kummerfeld S.K."/>
            <person name="Kurochkin I.V."/>
            <person name="Lareau L.F."/>
            <person name="Lazarevic D."/>
            <person name="Lipovich L."/>
            <person name="Liu J."/>
            <person name="Liuni S."/>
            <person name="McWilliam S."/>
            <person name="Madan Babu M."/>
            <person name="Madera M."/>
            <person name="Marchionni L."/>
            <person name="Matsuda H."/>
            <person name="Matsuzawa S."/>
            <person name="Miki H."/>
            <person name="Mignone F."/>
            <person name="Miyake S."/>
            <person name="Morris K."/>
            <person name="Mottagui-Tabar S."/>
            <person name="Mulder N."/>
            <person name="Nakano N."/>
            <person name="Nakauchi H."/>
            <person name="Ng P."/>
            <person name="Nilsson R."/>
            <person name="Nishiguchi S."/>
            <person name="Nishikawa S."/>
            <person name="Nori F."/>
            <person name="Ohara O."/>
            <person name="Okazaki Y."/>
            <person name="Orlando V."/>
            <person name="Pang K.C."/>
            <person name="Pavan W.J."/>
            <person name="Pavesi G."/>
            <person name="Pesole G."/>
            <person name="Petrovsky N."/>
            <person name="Piazza S."/>
            <person name="Reed J."/>
            <person name="Reid J.F."/>
            <person name="Ring B.Z."/>
            <person name="Ringwald M."/>
            <person name="Rost B."/>
            <person name="Ruan Y."/>
            <person name="Salzberg S.L."/>
            <person name="Sandelin A."/>
            <person name="Schneider C."/>
            <person name="Schoenbach C."/>
            <person name="Sekiguchi K."/>
            <person name="Semple C.A."/>
            <person name="Seno S."/>
            <person name="Sessa L."/>
            <person name="Sheng Y."/>
            <person name="Shibata Y."/>
            <person name="Shimada H."/>
            <person name="Shimada K."/>
            <person name="Silva D."/>
            <person name="Sinclair B."/>
            <person name="Sperling S."/>
            <person name="Stupka E."/>
            <person name="Sugiura K."/>
            <person name="Sultana R."/>
            <person name="Takenaka Y."/>
            <person name="Taki K."/>
            <person name="Tammoja K."/>
            <person name="Tan S.L."/>
            <person name="Tang S."/>
            <person name="Taylor M.S."/>
            <person name="Tegner J."/>
            <person name="Teichmann S.A."/>
            <person name="Ueda H.R."/>
            <person name="van Nimwegen E."/>
            <person name="Verardo R."/>
            <person name="Wei C.L."/>
            <person name="Yagi K."/>
            <person name="Yamanishi H."/>
            <person name="Zabarovsky E."/>
            <person name="Zhu S."/>
            <person name="Zimmer A."/>
            <person name="Hide W."/>
            <person name="Bult C."/>
            <person name="Grimmond S.M."/>
            <person name="Teasdale R.D."/>
            <person name="Liu E.T."/>
            <person name="Brusic V."/>
            <person name="Quackenbush J."/>
            <person name="Wahlestedt C."/>
            <person name="Mattick J.S."/>
            <person name="Hume D.A."/>
            <person name="Kai C."/>
            <person name="Sasaki D."/>
            <person name="Tomaru Y."/>
            <person name="Fukuda S."/>
            <person name="Kanamori-Katayama M."/>
            <person name="Suzuki M."/>
            <person name="Aoki J."/>
            <person name="Arakawa T."/>
            <person name="Iida J."/>
            <person name="Imamura K."/>
            <person name="Itoh M."/>
            <person name="Kato T."/>
            <person name="Kawaji H."/>
            <person name="Kawagashira N."/>
            <person name="Kawashima T."/>
            <person name="Kojima M."/>
            <person name="Kondo S."/>
            <person name="Konno H."/>
            <person name="Nakano K."/>
            <person name="Ninomiya N."/>
            <person name="Nishio T."/>
            <person name="Okada M."/>
            <person name="Plessy C."/>
            <person name="Shibata K."/>
            <person name="Shiraki T."/>
            <person name="Suzuki S."/>
            <person name="Tagami M."/>
            <person name="Waki K."/>
            <person name="Watahiki A."/>
            <person name="Okamura-Oho Y."/>
            <person name="Suzuki H."/>
            <person name="Kawai J."/>
            <person name="Hayashizaki Y."/>
        </authorList>
    </citation>
    <scope>NUCLEOTIDE SEQUENCE [LARGE SCALE MRNA]</scope>
    <source>
        <strain>C57BL/6J</strain>
        <tissue>Embryonic stem cell</tissue>
        <tissue>Lung</tissue>
        <tissue>Placenta</tissue>
        <tissue>Thymus</tissue>
    </source>
</reference>
<reference key="2">
    <citation type="journal article" date="2004" name="Genome Res.">
        <title>The status, quality, and expansion of the NIH full-length cDNA project: the Mammalian Gene Collection (MGC).</title>
        <authorList>
            <consortium name="The MGC Project Team"/>
        </authorList>
    </citation>
    <scope>NUCLEOTIDE SEQUENCE [LARGE SCALE MRNA]</scope>
    <source>
        <strain>C57BL/6J</strain>
        <tissue>Embryonic testis</tissue>
    </source>
</reference>
<reference key="3">
    <citation type="journal article" date="2010" name="Cell">
        <title>A tissue-specific atlas of mouse protein phosphorylation and expression.</title>
        <authorList>
            <person name="Huttlin E.L."/>
            <person name="Jedrychowski M.P."/>
            <person name="Elias J.E."/>
            <person name="Goswami T."/>
            <person name="Rad R."/>
            <person name="Beausoleil S.A."/>
            <person name="Villen J."/>
            <person name="Haas W."/>
            <person name="Sowa M.E."/>
            <person name="Gygi S.P."/>
        </authorList>
    </citation>
    <scope>IDENTIFICATION BY MASS SPECTROMETRY [LARGE SCALE ANALYSIS]</scope>
    <source>
        <tissue>Brain</tissue>
        <tissue>Lung</tissue>
        <tissue>Spleen</tissue>
    </source>
</reference>
<reference key="4">
    <citation type="journal article" date="2014" name="Mol. Cell. Proteomics">
        <title>Immunoaffinity enrichment and mass spectrometry analysis of protein methylation.</title>
        <authorList>
            <person name="Guo A."/>
            <person name="Gu H."/>
            <person name="Zhou J."/>
            <person name="Mulhern D."/>
            <person name="Wang Y."/>
            <person name="Lee K.A."/>
            <person name="Yang V."/>
            <person name="Aguiar M."/>
            <person name="Kornhauser J."/>
            <person name="Jia X."/>
            <person name="Ren J."/>
            <person name="Beausoleil S.A."/>
            <person name="Silva J.C."/>
            <person name="Vemulapalli V."/>
            <person name="Bedford M.T."/>
            <person name="Comb M.J."/>
        </authorList>
    </citation>
    <scope>METHYLATION [LARGE SCALE ANALYSIS] AT ARG-39</scope>
    <scope>IDENTIFICATION BY MASS SPECTROMETRY [LARGE SCALE ANALYSIS]</scope>
    <source>
        <tissue>Brain</tissue>
        <tissue>Embryo</tissue>
    </source>
</reference>
<dbReference type="EMBL" id="AK010503">
    <property type="protein sequence ID" value="BAB26988.1"/>
    <property type="molecule type" value="mRNA"/>
</dbReference>
<dbReference type="EMBL" id="AK144692">
    <property type="protein sequence ID" value="BAE26018.1"/>
    <property type="molecule type" value="mRNA"/>
</dbReference>
<dbReference type="EMBL" id="AK167440">
    <property type="protein sequence ID" value="BAE39526.1"/>
    <property type="molecule type" value="mRNA"/>
</dbReference>
<dbReference type="EMBL" id="BC049091">
    <property type="protein sequence ID" value="AAH49091.1"/>
    <property type="molecule type" value="mRNA"/>
</dbReference>
<dbReference type="EMBL" id="BC050812">
    <property type="protein sequence ID" value="AAH50812.1"/>
    <property type="molecule type" value="mRNA"/>
</dbReference>
<dbReference type="CCDS" id="CCDS14906.1"/>
<dbReference type="RefSeq" id="NP_082319.1">
    <property type="nucleotide sequence ID" value="NM_028043.3"/>
</dbReference>
<dbReference type="SMR" id="Q9CWN7"/>
<dbReference type="BioGRID" id="206852">
    <property type="interactions" value="2"/>
</dbReference>
<dbReference type="FunCoup" id="Q9CWN7">
    <property type="interactions" value="972"/>
</dbReference>
<dbReference type="IntAct" id="Q9CWN7">
    <property type="interactions" value="2"/>
</dbReference>
<dbReference type="MINT" id="Q9CWN7"/>
<dbReference type="STRING" id="10090.ENSMUSP00000125638"/>
<dbReference type="GlyGen" id="Q9CWN7">
    <property type="glycosylation" value="2 sites, 1 N-linked glycan (1 site)"/>
</dbReference>
<dbReference type="iPTMnet" id="Q9CWN7"/>
<dbReference type="PhosphoSitePlus" id="Q9CWN7"/>
<dbReference type="SwissPalm" id="Q9CWN7"/>
<dbReference type="PaxDb" id="10090-ENSMUSP00000125638"/>
<dbReference type="PeptideAtlas" id="Q9CWN7"/>
<dbReference type="ProteomicsDB" id="283650"/>
<dbReference type="Pumba" id="Q9CWN7"/>
<dbReference type="Antibodypedia" id="47523">
    <property type="antibodies" value="70 antibodies from 12 providers"/>
</dbReference>
<dbReference type="Ensembl" id="ENSMUST00000003219.14">
    <property type="protein sequence ID" value="ENSMUSP00000003219.9"/>
    <property type="gene ID" value="ENSMUSG00000003135.16"/>
</dbReference>
<dbReference type="Ensembl" id="ENSMUST00000161515.8">
    <property type="protein sequence ID" value="ENSMUSP00000125638.2"/>
    <property type="gene ID" value="ENSMUSG00000003135.16"/>
</dbReference>
<dbReference type="GeneID" id="52846"/>
<dbReference type="KEGG" id="mmu:52846"/>
<dbReference type="UCSC" id="uc007ati.1">
    <property type="organism name" value="mouse"/>
</dbReference>
<dbReference type="AGR" id="MGI:106580"/>
<dbReference type="CTD" id="55571"/>
<dbReference type="MGI" id="MGI:106580">
    <property type="gene designation" value="Cnot11"/>
</dbReference>
<dbReference type="VEuPathDB" id="HostDB:ENSMUSG00000003135"/>
<dbReference type="eggNOG" id="KOG4508">
    <property type="taxonomic scope" value="Eukaryota"/>
</dbReference>
<dbReference type="GeneTree" id="ENSGT00390000006356"/>
<dbReference type="HOGENOM" id="CLU_028648_0_1_1"/>
<dbReference type="InParanoid" id="Q9CWN7"/>
<dbReference type="OMA" id="PDHSVQW"/>
<dbReference type="OrthoDB" id="10265389at2759"/>
<dbReference type="PhylomeDB" id="Q9CWN7"/>
<dbReference type="TreeFam" id="TF323711"/>
<dbReference type="Reactome" id="R-MMU-429947">
    <property type="pathway name" value="Deadenylation of mRNA"/>
</dbReference>
<dbReference type="Reactome" id="R-MMU-6804115">
    <property type="pathway name" value="TP53 regulates transcription of additional cell cycle genes whose exact role in the p53 pathway remain uncertain"/>
</dbReference>
<dbReference type="BioGRID-ORCS" id="52846">
    <property type="hits" value="22 hits in 82 CRISPR screens"/>
</dbReference>
<dbReference type="PRO" id="PR:Q9CWN7"/>
<dbReference type="Proteomes" id="UP000000589">
    <property type="component" value="Chromosome 1"/>
</dbReference>
<dbReference type="RNAct" id="Q9CWN7">
    <property type="molecule type" value="protein"/>
</dbReference>
<dbReference type="Bgee" id="ENSMUSG00000003135">
    <property type="expression patterns" value="Expressed in primary oocyte and 233 other cell types or tissues"/>
</dbReference>
<dbReference type="ExpressionAtlas" id="Q9CWN7">
    <property type="expression patterns" value="baseline and differential"/>
</dbReference>
<dbReference type="GO" id="GO:0030014">
    <property type="term" value="C:CCR4-NOT complex"/>
    <property type="evidence" value="ECO:0000250"/>
    <property type="project" value="UniProtKB"/>
</dbReference>
<dbReference type="GO" id="GO:0005829">
    <property type="term" value="C:cytosol"/>
    <property type="evidence" value="ECO:0000304"/>
    <property type="project" value="Reactome"/>
</dbReference>
<dbReference type="GO" id="GO:0005634">
    <property type="term" value="C:nucleus"/>
    <property type="evidence" value="ECO:0007669"/>
    <property type="project" value="UniProtKB-SubCell"/>
</dbReference>
<dbReference type="GO" id="GO:0006417">
    <property type="term" value="P:regulation of translation"/>
    <property type="evidence" value="ECO:0007669"/>
    <property type="project" value="UniProtKB-KW"/>
</dbReference>
<dbReference type="GO" id="GO:0031047">
    <property type="term" value="P:regulatory ncRNA-mediated gene silencing"/>
    <property type="evidence" value="ECO:0007669"/>
    <property type="project" value="UniProtKB-KW"/>
</dbReference>
<dbReference type="InterPro" id="IPR019312">
    <property type="entry name" value="CNOT11"/>
</dbReference>
<dbReference type="PANTHER" id="PTHR15975">
    <property type="entry name" value="CCR4-NOT TRANSCRIPTION COMPLEX SUBUNIT 11"/>
    <property type="match status" value="1"/>
</dbReference>
<dbReference type="PANTHER" id="PTHR15975:SF0">
    <property type="entry name" value="CCR4-NOT TRANSCRIPTION COMPLEX SUBUNIT 11"/>
    <property type="match status" value="1"/>
</dbReference>
<dbReference type="Pfam" id="PF10155">
    <property type="entry name" value="CNOT11"/>
    <property type="match status" value="1"/>
</dbReference>
<name>CNO11_MOUSE</name>
<gene>
    <name type="primary">Cnot11</name>
    <name type="synonym">D1Bwg0212e</name>
</gene>
<sequence>MPGGGASTASGRLLSSADPRGAREAAAFRSGPAGSSGGRGGAGGPGPGIGGPAGRMSLTPKELSSLLSIISEEAGGGSTFEGLSTAFHHYFSKADHFRLGSVLVMLLQQPDLLPSAAQRLTALYLLWEMYRTEPLAANPFAASFAHLLNPAPPARGGQEPDRPPLSGFLPPITPPEKFFLSQLMLAPPRELFKKTPRQIALMDVGNMGQSVDISGLQLALAERQSELPTQSKASFPSILSDPDPDSSNSGFDSSVASRITESLVSGPKPPIESHFRPEFIRPPPPLHICEDELAWLNPTEPEHAIQWDRSMCVKNSTGVEIKRIMAKAFKSPLSSPQQTQLLGELEKDPKLVYHIGLTPAKLPDLVENNPLVAIEMLLKLMQSSQITEYFSVLVNMDMSLHSMEVVNRLTTAVDLPPEFIHLYISNCISTCEQIKDKYMQNRLVRLVCVFLQSLIRNKIINVQDLFIEVQAFCIEFSRIREAAGLFRLLKTLDTGETPSETKISK</sequence>
<keyword id="KW-0963">Cytoplasm</keyword>
<keyword id="KW-0488">Methylation</keyword>
<keyword id="KW-0539">Nucleus</keyword>
<keyword id="KW-1185">Reference proteome</keyword>
<keyword id="KW-0943">RNA-mediated gene silencing</keyword>
<keyword id="KW-0804">Transcription</keyword>
<keyword id="KW-0805">Transcription regulation</keyword>
<keyword id="KW-0810">Translation regulation</keyword>
<protein>
    <recommendedName>
        <fullName>CCR4-NOT transcription complex subunit 11</fullName>
    </recommendedName>
</protein>
<proteinExistence type="evidence at protein level"/>
<feature type="chain" id="PRO_0000089358" description="CCR4-NOT transcription complex subunit 11">
    <location>
        <begin position="1"/>
        <end position="505"/>
    </location>
</feature>
<feature type="region of interest" description="Disordered" evidence="2">
    <location>
        <begin position="1"/>
        <end position="56"/>
    </location>
</feature>
<feature type="region of interest" description="Disordered" evidence="2">
    <location>
        <begin position="227"/>
        <end position="254"/>
    </location>
</feature>
<feature type="compositionally biased region" description="Gly residues" evidence="2">
    <location>
        <begin position="34"/>
        <end position="53"/>
    </location>
</feature>
<feature type="compositionally biased region" description="Low complexity" evidence="2">
    <location>
        <begin position="234"/>
        <end position="254"/>
    </location>
</feature>
<feature type="modified residue" description="Omega-N-methylarginine" evidence="4">
    <location>
        <position position="39"/>
    </location>
</feature>
<accession>Q9CWN7</accession>
<accession>Q3TJG9</accession>
<evidence type="ECO:0000250" key="1"/>
<evidence type="ECO:0000256" key="2">
    <source>
        <dbReference type="SAM" id="MobiDB-lite"/>
    </source>
</evidence>
<evidence type="ECO:0000305" key="3"/>
<evidence type="ECO:0007744" key="4">
    <source>
    </source>
</evidence>